<organism>
    <name type="scientific">Macaca mulatta</name>
    <name type="common">Rhesus macaque</name>
    <dbReference type="NCBI Taxonomy" id="9544"/>
    <lineage>
        <taxon>Eukaryota</taxon>
        <taxon>Metazoa</taxon>
        <taxon>Chordata</taxon>
        <taxon>Craniata</taxon>
        <taxon>Vertebrata</taxon>
        <taxon>Euteleostomi</taxon>
        <taxon>Mammalia</taxon>
        <taxon>Eutheria</taxon>
        <taxon>Euarchontoglires</taxon>
        <taxon>Primates</taxon>
        <taxon>Haplorrhini</taxon>
        <taxon>Catarrhini</taxon>
        <taxon>Cercopithecidae</taxon>
        <taxon>Cercopithecinae</taxon>
        <taxon>Macaca</taxon>
    </lineage>
</organism>
<gene>
    <name type="primary">ALB</name>
</gene>
<sequence>LLFLFSSAYSRGVFRRDTHKSEVAHRFKDLGEEHFKGLVLVAFSQYLQQCPFEEHVKLVNEVTEFAKTCVADESAENCDKSLHTLFGDKLCTVATLRETYGEMADCCAKQEPERNECFLQHKDDNPNLPPLVRPEVDVMCTAFHDNEATFLKKYLYEVARRHPYFYAPELLFFAARYKAAFAECCQAADKAACLLPKLDELRDEGKASSAKQRLKCASLQKFGDRAFKAWAVARLSQKFPKAEFAEVSKLVTDLTKVHTECCHGDLLECADDRADLAKYMCENQDSISSKLKECCDKPLLEKSHCLAEVENDEMPADLPSLAADYVESKDVCKNYAEAKDVFLGMFLYEYARRHPDYSVMLLLRLAKAYEATLEKCCAAADPHECYAKVFDEFQPLVEEPQNLVKQNCELFEQLGEYKFQNALLVRYTKKVPQVSTPTLVEVSRNLGKVGAKCCKLPEAKRMPCAEDYLSVVLNRLCVLHEKTPVSEKVTKCCTESLVNRRPCFSALELDEAYVPKAFNAETFTFHADMCTLSEKEKQVKKQTALVELVKHKPKATKEQLKGVMDNFAAFVEKCCKADDKEACFAEEGPKFVAASQAALA</sequence>
<feature type="signal peptide" evidence="3">
    <location>
        <begin position="1" status="less than"/>
        <end position="10"/>
    </location>
</feature>
<feature type="propeptide" id="PRO_0000001069" evidence="3">
    <location>
        <begin position="11"/>
        <end position="16"/>
    </location>
</feature>
<feature type="chain" id="PRO_0000001070" description="Albumin">
    <location>
        <begin position="17"/>
        <end position="600"/>
    </location>
</feature>
<feature type="domain" description="Albumin 1" evidence="5">
    <location>
        <begin position="11"/>
        <end position="202"/>
    </location>
</feature>
<feature type="domain" description="Albumin 2" evidence="5">
    <location>
        <begin position="203"/>
        <end position="395"/>
    </location>
</feature>
<feature type="domain" description="Albumin 3" evidence="5">
    <location>
        <begin position="396"/>
        <end position="593"/>
    </location>
</feature>
<feature type="binding site" evidence="3">
    <location>
        <position position="19"/>
    </location>
    <ligand>
        <name>Cu cation</name>
        <dbReference type="ChEBI" id="CHEBI:23378"/>
    </ligand>
</feature>
<feature type="binding site" evidence="2">
    <location>
        <position position="22"/>
    </location>
    <ligand>
        <name>Ca(2+)</name>
        <dbReference type="ChEBI" id="CHEBI:29108"/>
        <label>1</label>
    </ligand>
</feature>
<feature type="binding site" evidence="2">
    <location>
        <position position="29"/>
    </location>
    <ligand>
        <name>Ca(2+)</name>
        <dbReference type="ChEBI" id="CHEBI:29108"/>
        <label>2</label>
    </ligand>
</feature>
<feature type="binding site" evidence="1">
    <location>
        <position position="83"/>
    </location>
    <ligand>
        <name>Zn(2+)</name>
        <dbReference type="ChEBI" id="CHEBI:29105"/>
    </ligand>
</feature>
<feature type="binding site" evidence="1">
    <location>
        <position position="256"/>
    </location>
    <ligand>
        <name>(4Z,15Z)-bilirubin IXalpha</name>
        <dbReference type="ChEBI" id="CHEBI:57977"/>
    </ligand>
</feature>
<feature type="binding site" evidence="2">
    <location>
        <position position="260"/>
    </location>
    <ligand>
        <name>Ca(2+)</name>
        <dbReference type="ChEBI" id="CHEBI:29108"/>
        <label>1</label>
    </ligand>
</feature>
<feature type="binding site" evidence="1">
    <location>
        <position position="263"/>
    </location>
    <ligand>
        <name>Zn(2+)</name>
        <dbReference type="ChEBI" id="CHEBI:29105"/>
    </ligand>
</feature>
<feature type="binding site" evidence="2">
    <location>
        <position position="265"/>
    </location>
    <ligand>
        <name>Ca(2+)</name>
        <dbReference type="ChEBI" id="CHEBI:29108"/>
        <label>1</label>
    </ligand>
</feature>
<feature type="binding site" evidence="1">
    <location>
        <position position="265"/>
    </location>
    <ligand>
        <name>Zn(2+)</name>
        <dbReference type="ChEBI" id="CHEBI:29105"/>
    </ligand>
</feature>
<feature type="binding site" evidence="2">
    <location>
        <position position="268"/>
    </location>
    <ligand>
        <name>Ca(2+)</name>
        <dbReference type="ChEBI" id="CHEBI:29108"/>
        <label>1</label>
    </ligand>
</feature>
<feature type="binding site" evidence="2">
    <location>
        <position position="271"/>
    </location>
    <ligand>
        <name>Ca(2+)</name>
        <dbReference type="ChEBI" id="CHEBI:29108"/>
        <label>2</label>
    </ligand>
</feature>
<feature type="binding site" evidence="2">
    <location>
        <position position="275"/>
    </location>
    <ligand>
        <name>Ca(2+)</name>
        <dbReference type="ChEBI" id="CHEBI:29108"/>
        <label>2</label>
    </ligand>
</feature>
<feature type="modified residue" description="Phosphoserine" evidence="1">
    <location>
        <position position="21"/>
    </location>
</feature>
<feature type="modified residue" description="Phosphoserine" evidence="1">
    <location>
        <position position="74"/>
    </location>
</feature>
<feature type="modified residue" description="Phosphoserine" evidence="1">
    <location>
        <position position="81"/>
    </location>
</feature>
<feature type="modified residue" description="Phosphothreonine" evidence="1">
    <location>
        <position position="99"/>
    </location>
</feature>
<feature type="modified residue" description="N6-succinyllysine" evidence="4">
    <location>
        <position position="221"/>
    </location>
</feature>
<feature type="modified residue" description="Phosphoserine" evidence="4">
    <location>
        <position position="289"/>
    </location>
</feature>
<feature type="modified residue" description="Phosphoserine" evidence="1">
    <location>
        <position position="435"/>
    </location>
</feature>
<feature type="modified residue" description="Phosphothreonine" evidence="1">
    <location>
        <position position="436"/>
    </location>
</feature>
<feature type="modified residue" description="Phosphothreonine" evidence="1">
    <location>
        <position position="438"/>
    </location>
</feature>
<feature type="modified residue" description="N6-succinyllysine" evidence="4">
    <location>
        <position position="452"/>
    </location>
</feature>
<feature type="modified residue" description="Phosphoserine" evidence="1">
    <location>
        <position position="505"/>
    </location>
</feature>
<feature type="modified residue" description="N6-succinyllysine" evidence="4">
    <location>
        <position position="535"/>
    </location>
</feature>
<feature type="modified residue" description="N6-methyllysine" evidence="1">
    <location>
        <position position="550"/>
    </location>
</feature>
<feature type="modified residue" description="N6-succinyllysine" evidence="4">
    <location>
        <position position="580"/>
    </location>
</feature>
<feature type="disulfide bond" evidence="5">
    <location>
        <begin position="69"/>
        <end position="78"/>
    </location>
</feature>
<feature type="disulfide bond" evidence="5">
    <location>
        <begin position="91"/>
        <end position="107"/>
    </location>
</feature>
<feature type="disulfide bond" evidence="5">
    <location>
        <begin position="106"/>
        <end position="117"/>
    </location>
</feature>
<feature type="disulfide bond" evidence="5">
    <location>
        <begin position="140"/>
        <end position="185"/>
    </location>
</feature>
<feature type="disulfide bond" evidence="5">
    <location>
        <begin position="184"/>
        <end position="193"/>
    </location>
</feature>
<feature type="disulfide bond" evidence="5">
    <location>
        <begin position="216"/>
        <end position="262"/>
    </location>
</feature>
<feature type="disulfide bond" evidence="5">
    <location>
        <begin position="261"/>
        <end position="269"/>
    </location>
</feature>
<feature type="disulfide bond" evidence="5">
    <location>
        <begin position="281"/>
        <end position="295"/>
    </location>
</feature>
<feature type="disulfide bond" evidence="5">
    <location>
        <begin position="294"/>
        <end position="305"/>
    </location>
</feature>
<feature type="disulfide bond" evidence="5">
    <location>
        <begin position="332"/>
        <end position="377"/>
    </location>
</feature>
<feature type="disulfide bond" evidence="5">
    <location>
        <begin position="376"/>
        <end position="385"/>
    </location>
</feature>
<feature type="disulfide bond" evidence="5">
    <location>
        <begin position="408"/>
        <end position="454"/>
    </location>
</feature>
<feature type="disulfide bond" evidence="5">
    <location>
        <begin position="453"/>
        <end position="464"/>
    </location>
</feature>
<feature type="disulfide bond" evidence="5">
    <location>
        <begin position="477"/>
        <end position="493"/>
    </location>
</feature>
<feature type="disulfide bond" evidence="5">
    <location>
        <begin position="492"/>
        <end position="503"/>
    </location>
</feature>
<feature type="disulfide bond" evidence="5">
    <location>
        <begin position="530"/>
        <end position="575"/>
    </location>
</feature>
<feature type="disulfide bond" evidence="5">
    <location>
        <begin position="574"/>
        <end position="583"/>
    </location>
</feature>
<feature type="non-terminal residue">
    <location>
        <position position="1"/>
    </location>
</feature>
<protein>
    <recommendedName>
        <fullName>Albumin</fullName>
    </recommendedName>
</protein>
<dbReference type="EMBL" id="M90463">
    <property type="protein sequence ID" value="AAA36906.1"/>
    <property type="molecule type" value="mRNA"/>
</dbReference>
<dbReference type="PIR" id="A47391">
    <property type="entry name" value="A47391"/>
</dbReference>
<dbReference type="RefSeq" id="NP_001182578.1">
    <property type="nucleotide sequence ID" value="NM_001195649.1"/>
</dbReference>
<dbReference type="SMR" id="Q28522"/>
<dbReference type="FunCoup" id="Q28522">
    <property type="interactions" value="784"/>
</dbReference>
<dbReference type="STRING" id="9544.ENSMMUP00000005101"/>
<dbReference type="PaxDb" id="9544-ENSMMUP00000005100"/>
<dbReference type="GeneID" id="704892"/>
<dbReference type="KEGG" id="mcc:704892"/>
<dbReference type="CTD" id="213"/>
<dbReference type="eggNOG" id="ENOG502R7EA">
    <property type="taxonomic scope" value="Eukaryota"/>
</dbReference>
<dbReference type="InParanoid" id="Q28522"/>
<dbReference type="OrthoDB" id="9875082at2759"/>
<dbReference type="Proteomes" id="UP000006718">
    <property type="component" value="Unassembled WGS sequence"/>
</dbReference>
<dbReference type="GO" id="GO:0005737">
    <property type="term" value="C:cytoplasm"/>
    <property type="evidence" value="ECO:0000318"/>
    <property type="project" value="GO_Central"/>
</dbReference>
<dbReference type="GO" id="GO:0005615">
    <property type="term" value="C:extracellular space"/>
    <property type="evidence" value="ECO:0007669"/>
    <property type="project" value="InterPro"/>
</dbReference>
<dbReference type="GO" id="GO:0032991">
    <property type="term" value="C:protein-containing complex"/>
    <property type="evidence" value="ECO:0000250"/>
    <property type="project" value="UniProtKB"/>
</dbReference>
<dbReference type="GO" id="GO:0003677">
    <property type="term" value="F:DNA binding"/>
    <property type="evidence" value="ECO:0000250"/>
    <property type="project" value="UniProtKB"/>
</dbReference>
<dbReference type="GO" id="GO:1903981">
    <property type="term" value="F:enterobactin binding"/>
    <property type="evidence" value="ECO:0000250"/>
    <property type="project" value="UniProtKB"/>
</dbReference>
<dbReference type="GO" id="GO:0005504">
    <property type="term" value="F:fatty acid binding"/>
    <property type="evidence" value="ECO:0000250"/>
    <property type="project" value="UniProtKB"/>
</dbReference>
<dbReference type="GO" id="GO:0046872">
    <property type="term" value="F:metal ion binding"/>
    <property type="evidence" value="ECO:0007669"/>
    <property type="project" value="UniProtKB-KW"/>
</dbReference>
<dbReference type="GO" id="GO:0030170">
    <property type="term" value="F:pyridoxal phosphate binding"/>
    <property type="evidence" value="ECO:0000250"/>
    <property type="project" value="UniProtKB"/>
</dbReference>
<dbReference type="GO" id="GO:0015643">
    <property type="term" value="F:toxic substance binding"/>
    <property type="evidence" value="ECO:0000250"/>
    <property type="project" value="UniProtKB"/>
</dbReference>
<dbReference type="GO" id="GO:0072732">
    <property type="term" value="P:cellular response to calcium ion starvation"/>
    <property type="evidence" value="ECO:0000250"/>
    <property type="project" value="UniProtKB"/>
</dbReference>
<dbReference type="GO" id="GO:0009267">
    <property type="term" value="P:cellular response to starvation"/>
    <property type="evidence" value="ECO:0000250"/>
    <property type="project" value="UniProtKB"/>
</dbReference>
<dbReference type="GO" id="GO:0051902">
    <property type="term" value="P:negative regulation of mitochondrial depolarization"/>
    <property type="evidence" value="ECO:0000250"/>
    <property type="project" value="UniProtKB"/>
</dbReference>
<dbReference type="CDD" id="cd00015">
    <property type="entry name" value="ALBUMIN"/>
    <property type="match status" value="3"/>
</dbReference>
<dbReference type="FunFam" id="1.10.246.10:FF:000001">
    <property type="entry name" value="Serum albumin"/>
    <property type="match status" value="2"/>
</dbReference>
<dbReference type="FunFam" id="1.10.246.10:FF:000002">
    <property type="entry name" value="Serum albumin"/>
    <property type="match status" value="2"/>
</dbReference>
<dbReference type="FunFam" id="1.10.246.10:FF:000003">
    <property type="entry name" value="Serum albumin"/>
    <property type="match status" value="1"/>
</dbReference>
<dbReference type="FunFam" id="1.10.246.10:FF:000005">
    <property type="entry name" value="Serum albumin"/>
    <property type="match status" value="1"/>
</dbReference>
<dbReference type="Gene3D" id="1.10.246.10">
    <property type="match status" value="6"/>
</dbReference>
<dbReference type="InterPro" id="IPR000264">
    <property type="entry name" value="ALB/AFP/VDB"/>
</dbReference>
<dbReference type="InterPro" id="IPR020858">
    <property type="entry name" value="Serum_albumin-like"/>
</dbReference>
<dbReference type="InterPro" id="IPR021177">
    <property type="entry name" value="Serum_albumin/AFP/Afamin"/>
</dbReference>
<dbReference type="InterPro" id="IPR020857">
    <property type="entry name" value="Serum_albumin_CS"/>
</dbReference>
<dbReference type="InterPro" id="IPR014760">
    <property type="entry name" value="Serum_albumin_N"/>
</dbReference>
<dbReference type="PANTHER" id="PTHR11385:SF15">
    <property type="entry name" value="ALBUMIN"/>
    <property type="match status" value="1"/>
</dbReference>
<dbReference type="PANTHER" id="PTHR11385">
    <property type="entry name" value="SERUM ALBUMIN-RELATED"/>
    <property type="match status" value="1"/>
</dbReference>
<dbReference type="Pfam" id="PF00273">
    <property type="entry name" value="Serum_albumin"/>
    <property type="match status" value="3"/>
</dbReference>
<dbReference type="PIRSF" id="PIRSF002520">
    <property type="entry name" value="Serum_albumin_subgroup"/>
    <property type="match status" value="1"/>
</dbReference>
<dbReference type="PRINTS" id="PR00802">
    <property type="entry name" value="SERUMALBUMIN"/>
</dbReference>
<dbReference type="SMART" id="SM00103">
    <property type="entry name" value="ALBUMIN"/>
    <property type="match status" value="3"/>
</dbReference>
<dbReference type="SUPFAM" id="SSF48552">
    <property type="entry name" value="Serum albumin-like"/>
    <property type="match status" value="3"/>
</dbReference>
<dbReference type="PROSITE" id="PS00212">
    <property type="entry name" value="ALBUMIN_1"/>
    <property type="match status" value="3"/>
</dbReference>
<dbReference type="PROSITE" id="PS51438">
    <property type="entry name" value="ALBUMIN_2"/>
    <property type="match status" value="3"/>
</dbReference>
<proteinExistence type="evidence at transcript level"/>
<keyword id="KW-0106">Calcium</keyword>
<keyword id="KW-0165">Cleavage on pair of basic residues</keyword>
<keyword id="KW-0186">Copper</keyword>
<keyword id="KW-1015">Disulfide bond</keyword>
<keyword id="KW-0446">Lipid-binding</keyword>
<keyword id="KW-0479">Metal-binding</keyword>
<keyword id="KW-0488">Methylation</keyword>
<keyword id="KW-0597">Phosphoprotein</keyword>
<keyword id="KW-1185">Reference proteome</keyword>
<keyword id="KW-0677">Repeat</keyword>
<keyword id="KW-0964">Secreted</keyword>
<keyword id="KW-0732">Signal</keyword>
<keyword id="KW-0862">Zinc</keyword>
<reference key="1">
    <citation type="journal article" date="1993" name="Proc. Natl. Acad. Sci. U.S.A.">
        <title>cDNA and protein sequence of polymorphic macaque albumins that differ in bilirubin binding.</title>
        <authorList>
            <person name="Watkins S.A."/>
            <person name="Sakamoto Y."/>
            <person name="Madison J.M."/>
            <person name="Davis E.M."/>
            <person name="Smith D.G."/>
            <person name="Dwulet J."/>
            <person name="Putnam F.W."/>
        </authorList>
    </citation>
    <scope>NUCLEOTIDE SEQUENCE [MRNA]</scope>
</reference>
<evidence type="ECO:0000250" key="1">
    <source>
        <dbReference type="UniProtKB" id="P02768"/>
    </source>
</evidence>
<evidence type="ECO:0000250" key="2">
    <source>
        <dbReference type="UniProtKB" id="P02769"/>
    </source>
</evidence>
<evidence type="ECO:0000250" key="3">
    <source>
        <dbReference type="UniProtKB" id="P02770"/>
    </source>
</evidence>
<evidence type="ECO:0000250" key="4">
    <source>
        <dbReference type="UniProtKB" id="P07724"/>
    </source>
</evidence>
<evidence type="ECO:0000255" key="5">
    <source>
        <dbReference type="PROSITE-ProRule" id="PRU00769"/>
    </source>
</evidence>
<comment type="function">
    <text evidence="1 2">Binds water, Ca(2+), Na(+), K(+), fatty acids, hormones, bilirubin and drugs. Its main function is the regulation of the colloidal osmotic pressure of blood. Major zinc transporter in plasma, typically binds about 80% of all plasma zinc (By similarity). Major calcium and magnesium transporter in plasma, binds approximately 45% of circulating calcium and magnesium in plasma (By similarity). Potentially has more than two calcium-binding sites and might additionally bind calcium in a non-specific manner (By similarity). The shared binding site between zinc and calcium at residue Asp-265 suggests a crosstalk between zinc and calcium transport in the blood (By similarity). The rank order of affinity is zinc &gt; calcium &gt; magnesium (By similarity). Binds to the bacterial siderophore enterobactin and inhibits enterobactin-mediated iron uptake of E.coli from ferric transferrin, and may thereby limit the utilization of iron and growth of enteric bacteria such as E.coli (By similarity). Does not prevent iron uptake by the bacterial siderophore aerobactin (By similarity).</text>
</comment>
<comment type="subunit">
    <text evidence="1 4">Interacts with FCGRT; this interaction regulates ALB homeostasis (By similarity). Interacts with TASOR (By similarity). In plasma, occurs in a covalently-linked complex with chromophore-bound alpha-1-microglobulin; this interaction does not prevent fatty acid binding to ALB.</text>
</comment>
<comment type="subcellular location">
    <subcellularLocation>
        <location>Secreted</location>
    </subcellularLocation>
</comment>
<comment type="tissue specificity">
    <text>Plasma.</text>
</comment>
<comment type="PTM">
    <text evidence="1">Phosphorylated by FAM20C in the extracellular medium.</text>
</comment>
<comment type="similarity">
    <text evidence="5">Belongs to the ALB/AFP/VDB family.</text>
</comment>
<accession>Q28522</accession>
<name>ALBU_MACMU</name>